<organism>
    <name type="scientific">Buchnera aphidicola subsp. Acyrthosiphon pisum (strain Tuc7)</name>
    <dbReference type="NCBI Taxonomy" id="561501"/>
    <lineage>
        <taxon>Bacteria</taxon>
        <taxon>Pseudomonadati</taxon>
        <taxon>Pseudomonadota</taxon>
        <taxon>Gammaproteobacteria</taxon>
        <taxon>Enterobacterales</taxon>
        <taxon>Erwiniaceae</taxon>
        <taxon>Buchnera</taxon>
    </lineage>
</organism>
<reference key="1">
    <citation type="journal article" date="2009" name="Science">
        <title>The dynamics and time scale of ongoing genomic erosion in symbiotic bacteria.</title>
        <authorList>
            <person name="Moran N.A."/>
            <person name="McLaughlin H.J."/>
            <person name="Sorek R."/>
        </authorList>
    </citation>
    <scope>NUCLEOTIDE SEQUENCE [LARGE SCALE GENOMIC DNA]</scope>
    <source>
        <strain>Tuc7</strain>
    </source>
</reference>
<feature type="chain" id="PRO_1000199092" description="Glutamine--tRNA ligase">
    <location>
        <begin position="1"/>
        <end position="571"/>
    </location>
</feature>
<feature type="short sequence motif" description="'HIGH' region" evidence="1">
    <location>
        <begin position="35"/>
        <end position="45"/>
    </location>
</feature>
<feature type="short sequence motif" description="'KMSKS' region" evidence="1">
    <location>
        <begin position="269"/>
        <end position="273"/>
    </location>
</feature>
<feature type="binding site" evidence="1">
    <location>
        <begin position="36"/>
        <end position="38"/>
    </location>
    <ligand>
        <name>ATP</name>
        <dbReference type="ChEBI" id="CHEBI:30616"/>
    </ligand>
</feature>
<feature type="binding site" evidence="1">
    <location>
        <begin position="42"/>
        <end position="48"/>
    </location>
    <ligand>
        <name>ATP</name>
        <dbReference type="ChEBI" id="CHEBI:30616"/>
    </ligand>
</feature>
<feature type="binding site" evidence="1">
    <location>
        <position position="68"/>
    </location>
    <ligand>
        <name>L-glutamine</name>
        <dbReference type="ChEBI" id="CHEBI:58359"/>
    </ligand>
</feature>
<feature type="binding site" evidence="1">
    <location>
        <position position="213"/>
    </location>
    <ligand>
        <name>L-glutamine</name>
        <dbReference type="ChEBI" id="CHEBI:58359"/>
    </ligand>
</feature>
<feature type="binding site" evidence="1">
    <location>
        <position position="232"/>
    </location>
    <ligand>
        <name>ATP</name>
        <dbReference type="ChEBI" id="CHEBI:30616"/>
    </ligand>
</feature>
<feature type="binding site" evidence="1">
    <location>
        <begin position="262"/>
        <end position="263"/>
    </location>
    <ligand>
        <name>ATP</name>
        <dbReference type="ChEBI" id="CHEBI:30616"/>
    </ligand>
</feature>
<feature type="binding site" evidence="1">
    <location>
        <begin position="270"/>
        <end position="272"/>
    </location>
    <ligand>
        <name>ATP</name>
        <dbReference type="ChEBI" id="CHEBI:30616"/>
    </ligand>
</feature>
<comment type="catalytic activity">
    <reaction evidence="1">
        <text>tRNA(Gln) + L-glutamine + ATP = L-glutaminyl-tRNA(Gln) + AMP + diphosphate</text>
        <dbReference type="Rhea" id="RHEA:20121"/>
        <dbReference type="Rhea" id="RHEA-COMP:9662"/>
        <dbReference type="Rhea" id="RHEA-COMP:9681"/>
        <dbReference type="ChEBI" id="CHEBI:30616"/>
        <dbReference type="ChEBI" id="CHEBI:33019"/>
        <dbReference type="ChEBI" id="CHEBI:58359"/>
        <dbReference type="ChEBI" id="CHEBI:78442"/>
        <dbReference type="ChEBI" id="CHEBI:78521"/>
        <dbReference type="ChEBI" id="CHEBI:456215"/>
        <dbReference type="EC" id="6.1.1.18"/>
    </reaction>
</comment>
<comment type="subunit">
    <text evidence="1">Monomer.</text>
</comment>
<comment type="subcellular location">
    <subcellularLocation>
        <location evidence="1">Cytoplasm</location>
    </subcellularLocation>
</comment>
<comment type="similarity">
    <text evidence="1">Belongs to the class-I aminoacyl-tRNA synthetase family.</text>
</comment>
<dbReference type="EC" id="6.1.1.18" evidence="1"/>
<dbReference type="EMBL" id="CP001158">
    <property type="protein sequence ID" value="ACL30210.1"/>
    <property type="molecule type" value="Genomic_DNA"/>
</dbReference>
<dbReference type="RefSeq" id="WP_012619537.1">
    <property type="nucleotide sequence ID" value="NC_011834.1"/>
</dbReference>
<dbReference type="SMR" id="B8D7U5"/>
<dbReference type="KEGG" id="bau:BUAPTUC7_409"/>
<dbReference type="HOGENOM" id="CLU_001882_2_3_6"/>
<dbReference type="GO" id="GO:0005829">
    <property type="term" value="C:cytosol"/>
    <property type="evidence" value="ECO:0007669"/>
    <property type="project" value="TreeGrafter"/>
</dbReference>
<dbReference type="GO" id="GO:0005524">
    <property type="term" value="F:ATP binding"/>
    <property type="evidence" value="ECO:0007669"/>
    <property type="project" value="UniProtKB-UniRule"/>
</dbReference>
<dbReference type="GO" id="GO:0004819">
    <property type="term" value="F:glutamine-tRNA ligase activity"/>
    <property type="evidence" value="ECO:0007669"/>
    <property type="project" value="UniProtKB-UniRule"/>
</dbReference>
<dbReference type="GO" id="GO:0006425">
    <property type="term" value="P:glutaminyl-tRNA aminoacylation"/>
    <property type="evidence" value="ECO:0007669"/>
    <property type="project" value="InterPro"/>
</dbReference>
<dbReference type="GO" id="GO:0006424">
    <property type="term" value="P:glutamyl-tRNA aminoacylation"/>
    <property type="evidence" value="ECO:0007669"/>
    <property type="project" value="UniProtKB-UniRule"/>
</dbReference>
<dbReference type="FunFam" id="1.10.1160.10:FF:000001">
    <property type="entry name" value="Glutamine--tRNA ligase"/>
    <property type="match status" value="1"/>
</dbReference>
<dbReference type="FunFam" id="2.40.240.10:FF:000007">
    <property type="entry name" value="Glutamine--tRNA ligase"/>
    <property type="match status" value="1"/>
</dbReference>
<dbReference type="FunFam" id="3.90.800.10:FF:000001">
    <property type="entry name" value="Glutamine--tRNA ligase"/>
    <property type="match status" value="1"/>
</dbReference>
<dbReference type="FunFam" id="3.40.50.620:FF:000037">
    <property type="entry name" value="Glutamine--tRNA ligase cytoplasmic"/>
    <property type="match status" value="1"/>
</dbReference>
<dbReference type="Gene3D" id="1.10.1160.10">
    <property type="entry name" value="Glutamyl-trna Synthetase, Domain 2"/>
    <property type="match status" value="1"/>
</dbReference>
<dbReference type="Gene3D" id="3.90.800.10">
    <property type="entry name" value="Glutamyl-tRNA Synthetase, Domain 3"/>
    <property type="match status" value="1"/>
</dbReference>
<dbReference type="Gene3D" id="3.40.50.620">
    <property type="entry name" value="HUPs"/>
    <property type="match status" value="1"/>
</dbReference>
<dbReference type="Gene3D" id="2.40.240.10">
    <property type="entry name" value="Ribosomal Protein L25, Chain P"/>
    <property type="match status" value="2"/>
</dbReference>
<dbReference type="HAMAP" id="MF_00126">
    <property type="entry name" value="Gln_tRNA_synth"/>
    <property type="match status" value="1"/>
</dbReference>
<dbReference type="InterPro" id="IPR001412">
    <property type="entry name" value="aa-tRNA-synth_I_CS"/>
</dbReference>
<dbReference type="InterPro" id="IPR004514">
    <property type="entry name" value="Gln-tRNA-synth"/>
</dbReference>
<dbReference type="InterPro" id="IPR050132">
    <property type="entry name" value="Gln/Glu-tRNA_Ligase"/>
</dbReference>
<dbReference type="InterPro" id="IPR022861">
    <property type="entry name" value="Gln_tRNA_ligase_bac"/>
</dbReference>
<dbReference type="InterPro" id="IPR000924">
    <property type="entry name" value="Glu/Gln-tRNA-synth"/>
</dbReference>
<dbReference type="InterPro" id="IPR020058">
    <property type="entry name" value="Glu/Gln-tRNA-synth_Ib_cat-dom"/>
</dbReference>
<dbReference type="InterPro" id="IPR020059">
    <property type="entry name" value="Glu/Gln-tRNA-synth_Ib_codon-bd"/>
</dbReference>
<dbReference type="InterPro" id="IPR020061">
    <property type="entry name" value="Glu_tRNA_lig_a-bdl"/>
</dbReference>
<dbReference type="InterPro" id="IPR020056">
    <property type="entry name" value="Rbsml_bL25/Gln-tRNA_synth_N"/>
</dbReference>
<dbReference type="InterPro" id="IPR011035">
    <property type="entry name" value="Ribosomal_bL25/Gln-tRNA_synth"/>
</dbReference>
<dbReference type="InterPro" id="IPR014729">
    <property type="entry name" value="Rossmann-like_a/b/a_fold"/>
</dbReference>
<dbReference type="InterPro" id="IPR049437">
    <property type="entry name" value="tRNA-synt_1c_C2"/>
</dbReference>
<dbReference type="NCBIfam" id="TIGR00440">
    <property type="entry name" value="glnS"/>
    <property type="match status" value="1"/>
</dbReference>
<dbReference type="NCBIfam" id="NF011291">
    <property type="entry name" value="PRK14703.1"/>
    <property type="match status" value="1"/>
</dbReference>
<dbReference type="PANTHER" id="PTHR43097:SF5">
    <property type="entry name" value="GLUTAMATE--TRNA LIGASE"/>
    <property type="match status" value="1"/>
</dbReference>
<dbReference type="PANTHER" id="PTHR43097">
    <property type="entry name" value="GLUTAMINE-TRNA LIGASE"/>
    <property type="match status" value="1"/>
</dbReference>
<dbReference type="Pfam" id="PF00749">
    <property type="entry name" value="tRNA-synt_1c"/>
    <property type="match status" value="1"/>
</dbReference>
<dbReference type="Pfam" id="PF03950">
    <property type="entry name" value="tRNA-synt_1c_C"/>
    <property type="match status" value="1"/>
</dbReference>
<dbReference type="Pfam" id="PF20974">
    <property type="entry name" value="tRNA-synt_1c_C2"/>
    <property type="match status" value="1"/>
</dbReference>
<dbReference type="PRINTS" id="PR00987">
    <property type="entry name" value="TRNASYNTHGLU"/>
</dbReference>
<dbReference type="SUPFAM" id="SSF52374">
    <property type="entry name" value="Nucleotidylyl transferase"/>
    <property type="match status" value="1"/>
</dbReference>
<dbReference type="SUPFAM" id="SSF50715">
    <property type="entry name" value="Ribosomal protein L25-like"/>
    <property type="match status" value="1"/>
</dbReference>
<dbReference type="PROSITE" id="PS00178">
    <property type="entry name" value="AA_TRNA_LIGASE_I"/>
    <property type="match status" value="1"/>
</dbReference>
<accession>B8D7U5</accession>
<evidence type="ECO:0000255" key="1">
    <source>
        <dbReference type="HAMAP-Rule" id="MF_00126"/>
    </source>
</evidence>
<proteinExistence type="inferred from homology"/>
<name>SYQ_BUCAT</name>
<sequence>MDTKKEIKNNNFICQIINKDLNENKNLSFYTRFPPEPNGYLHIGHAKSICLNFELASLYKGRCNLRFDDTNPLKENIKYIKSIKHDINWLGYKWHGNVRYASEYFLKLYQYAQELIKKGLAYVDHLTKEQIREYRGTLNTPGKNSPYRNRTIQENIELFEKMKKGDFSEGEACLRAKINMSSSSIIMRDPVLYRIIFIKHHQTQNKWCIYPMYDFAHCLSDSIEGITHSLCTLEFQDNKFLYNWILKNTSVKHYPKQYEFSRLNLEFSILSKRKIKILIDKNIIEGWDDPRIPTLSALRRKGYTPSSIKNFCQKIGVTKQNNLIEFSMLEHCIRKELNQTAIRTMAILDPIKIFLYNLDSNYKEEFIVPNHPNNPEMGTHKIIFTNTIYIDRSDFKEKYDKKYKRLKLGEKIRLRYSYIIHAEKIEKDEYGNISNIICYCDLNTLGRKPKDNKNPAVIHWISEKNTLSAEFKLYDQLFNIKNPEQQENFLLYINSKSLIKKFGFIEKKIGEEIQKKISNNNIEIFFQFERIGYFCIDFIDSKKNQLVFNRTVGLRDTWDSKKIKTKNITNN</sequence>
<protein>
    <recommendedName>
        <fullName evidence="1">Glutamine--tRNA ligase</fullName>
        <ecNumber evidence="1">6.1.1.18</ecNumber>
    </recommendedName>
    <alternativeName>
        <fullName evidence="1">Glutaminyl-tRNA synthetase</fullName>
        <shortName evidence="1">GlnRS</shortName>
    </alternativeName>
</protein>
<gene>
    <name evidence="1" type="primary">glnS</name>
    <name type="ordered locus">BUAPTUC7_409</name>
</gene>
<keyword id="KW-0030">Aminoacyl-tRNA synthetase</keyword>
<keyword id="KW-0067">ATP-binding</keyword>
<keyword id="KW-0963">Cytoplasm</keyword>
<keyword id="KW-0436">Ligase</keyword>
<keyword id="KW-0547">Nucleotide-binding</keyword>
<keyword id="KW-0648">Protein biosynthesis</keyword>